<feature type="chain" id="PRO_0000187696" description="Peptidyl-tRNA hydrolase">
    <location>
        <begin position="1"/>
        <end position="187"/>
    </location>
</feature>
<feature type="active site" description="Proton acceptor" evidence="1">
    <location>
        <position position="19"/>
    </location>
</feature>
<feature type="binding site" evidence="1">
    <location>
        <position position="14"/>
    </location>
    <ligand>
        <name>tRNA</name>
        <dbReference type="ChEBI" id="CHEBI:17843"/>
    </ligand>
</feature>
<feature type="binding site" evidence="1">
    <location>
        <position position="64"/>
    </location>
    <ligand>
        <name>tRNA</name>
        <dbReference type="ChEBI" id="CHEBI:17843"/>
    </ligand>
</feature>
<feature type="binding site" evidence="1">
    <location>
        <position position="66"/>
    </location>
    <ligand>
        <name>tRNA</name>
        <dbReference type="ChEBI" id="CHEBI:17843"/>
    </ligand>
</feature>
<feature type="binding site" evidence="1">
    <location>
        <position position="112"/>
    </location>
    <ligand>
        <name>tRNA</name>
        <dbReference type="ChEBI" id="CHEBI:17843"/>
    </ligand>
</feature>
<feature type="site" description="Discriminates between blocked and unblocked aminoacyl-tRNA" evidence="1">
    <location>
        <position position="9"/>
    </location>
</feature>
<feature type="site" description="Stabilizes the basic form of H active site to accept a proton" evidence="1">
    <location>
        <position position="91"/>
    </location>
</feature>
<dbReference type="EC" id="3.1.1.29" evidence="1"/>
<dbReference type="EMBL" id="BX842653">
    <property type="protein sequence ID" value="CAE80497.1"/>
    <property type="molecule type" value="Genomic_DNA"/>
</dbReference>
<dbReference type="RefSeq" id="WP_011165100.1">
    <property type="nucleotide sequence ID" value="NC_005363.1"/>
</dbReference>
<dbReference type="SMR" id="Q6MJR3"/>
<dbReference type="STRING" id="264462.Bd2706"/>
<dbReference type="GeneID" id="93013596"/>
<dbReference type="KEGG" id="bba:Bd2706"/>
<dbReference type="eggNOG" id="COG0193">
    <property type="taxonomic scope" value="Bacteria"/>
</dbReference>
<dbReference type="HOGENOM" id="CLU_062456_4_1_7"/>
<dbReference type="Proteomes" id="UP000008080">
    <property type="component" value="Chromosome"/>
</dbReference>
<dbReference type="GO" id="GO:0005737">
    <property type="term" value="C:cytoplasm"/>
    <property type="evidence" value="ECO:0007669"/>
    <property type="project" value="UniProtKB-SubCell"/>
</dbReference>
<dbReference type="GO" id="GO:0004045">
    <property type="term" value="F:peptidyl-tRNA hydrolase activity"/>
    <property type="evidence" value="ECO:0007669"/>
    <property type="project" value="UniProtKB-UniRule"/>
</dbReference>
<dbReference type="GO" id="GO:0000049">
    <property type="term" value="F:tRNA binding"/>
    <property type="evidence" value="ECO:0007669"/>
    <property type="project" value="UniProtKB-UniRule"/>
</dbReference>
<dbReference type="GO" id="GO:0006515">
    <property type="term" value="P:protein quality control for misfolded or incompletely synthesized proteins"/>
    <property type="evidence" value="ECO:0007669"/>
    <property type="project" value="UniProtKB-UniRule"/>
</dbReference>
<dbReference type="GO" id="GO:0072344">
    <property type="term" value="P:rescue of stalled ribosome"/>
    <property type="evidence" value="ECO:0007669"/>
    <property type="project" value="UniProtKB-UniRule"/>
</dbReference>
<dbReference type="CDD" id="cd00462">
    <property type="entry name" value="PTH"/>
    <property type="match status" value="1"/>
</dbReference>
<dbReference type="FunFam" id="3.40.50.1470:FF:000001">
    <property type="entry name" value="Peptidyl-tRNA hydrolase"/>
    <property type="match status" value="1"/>
</dbReference>
<dbReference type="Gene3D" id="3.40.50.1470">
    <property type="entry name" value="Peptidyl-tRNA hydrolase"/>
    <property type="match status" value="1"/>
</dbReference>
<dbReference type="HAMAP" id="MF_00083">
    <property type="entry name" value="Pept_tRNA_hydro_bact"/>
    <property type="match status" value="1"/>
</dbReference>
<dbReference type="InterPro" id="IPR001328">
    <property type="entry name" value="Pept_tRNA_hydro"/>
</dbReference>
<dbReference type="InterPro" id="IPR018171">
    <property type="entry name" value="Pept_tRNA_hydro_CS"/>
</dbReference>
<dbReference type="InterPro" id="IPR036416">
    <property type="entry name" value="Pept_tRNA_hydro_sf"/>
</dbReference>
<dbReference type="NCBIfam" id="TIGR00447">
    <property type="entry name" value="pth"/>
    <property type="match status" value="1"/>
</dbReference>
<dbReference type="PANTHER" id="PTHR17224">
    <property type="entry name" value="PEPTIDYL-TRNA HYDROLASE"/>
    <property type="match status" value="1"/>
</dbReference>
<dbReference type="PANTHER" id="PTHR17224:SF1">
    <property type="entry name" value="PEPTIDYL-TRNA HYDROLASE"/>
    <property type="match status" value="1"/>
</dbReference>
<dbReference type="Pfam" id="PF01195">
    <property type="entry name" value="Pept_tRNA_hydro"/>
    <property type="match status" value="1"/>
</dbReference>
<dbReference type="SUPFAM" id="SSF53178">
    <property type="entry name" value="Peptidyl-tRNA hydrolase-like"/>
    <property type="match status" value="1"/>
</dbReference>
<dbReference type="PROSITE" id="PS01195">
    <property type="entry name" value="PEPT_TRNA_HYDROL_1"/>
    <property type="match status" value="1"/>
</dbReference>
<dbReference type="PROSITE" id="PS01196">
    <property type="entry name" value="PEPT_TRNA_HYDROL_2"/>
    <property type="match status" value="1"/>
</dbReference>
<protein>
    <recommendedName>
        <fullName evidence="1">Peptidyl-tRNA hydrolase</fullName>
        <shortName evidence="1">Pth</shortName>
        <ecNumber evidence="1">3.1.1.29</ecNumber>
    </recommendedName>
</protein>
<proteinExistence type="inferred from homology"/>
<reference key="1">
    <citation type="journal article" date="2004" name="Science">
        <title>A predator unmasked: life cycle of Bdellovibrio bacteriovorus from a genomic perspective.</title>
        <authorList>
            <person name="Rendulic S."/>
            <person name="Jagtap P."/>
            <person name="Rosinus A."/>
            <person name="Eppinger M."/>
            <person name="Baar C."/>
            <person name="Lanz C."/>
            <person name="Keller H."/>
            <person name="Lambert C."/>
            <person name="Evans K.J."/>
            <person name="Goesmann A."/>
            <person name="Meyer F."/>
            <person name="Sockett R.E."/>
            <person name="Schuster S.C."/>
        </authorList>
    </citation>
    <scope>NUCLEOTIDE SEQUENCE [LARGE SCALE GENOMIC DNA]</scope>
    <source>
        <strain>ATCC 15356 / DSM 50701 / NCIMB 9529 / HD100</strain>
    </source>
</reference>
<evidence type="ECO:0000255" key="1">
    <source>
        <dbReference type="HAMAP-Rule" id="MF_00083"/>
    </source>
</evidence>
<accession>Q6MJR3</accession>
<keyword id="KW-0963">Cytoplasm</keyword>
<keyword id="KW-0378">Hydrolase</keyword>
<keyword id="KW-1185">Reference proteome</keyword>
<keyword id="KW-0694">RNA-binding</keyword>
<keyword id="KW-0820">tRNA-binding</keyword>
<comment type="function">
    <text evidence="1">Hydrolyzes ribosome-free peptidyl-tRNAs (with 1 or more amino acids incorporated), which drop off the ribosome during protein synthesis, or as a result of ribosome stalling.</text>
</comment>
<comment type="function">
    <text evidence="1">Catalyzes the release of premature peptidyl moieties from peptidyl-tRNA molecules trapped in stalled 50S ribosomal subunits, and thus maintains levels of free tRNAs and 50S ribosomes.</text>
</comment>
<comment type="catalytic activity">
    <reaction evidence="1">
        <text>an N-acyl-L-alpha-aminoacyl-tRNA + H2O = an N-acyl-L-amino acid + a tRNA + H(+)</text>
        <dbReference type="Rhea" id="RHEA:54448"/>
        <dbReference type="Rhea" id="RHEA-COMP:10123"/>
        <dbReference type="Rhea" id="RHEA-COMP:13883"/>
        <dbReference type="ChEBI" id="CHEBI:15377"/>
        <dbReference type="ChEBI" id="CHEBI:15378"/>
        <dbReference type="ChEBI" id="CHEBI:59874"/>
        <dbReference type="ChEBI" id="CHEBI:78442"/>
        <dbReference type="ChEBI" id="CHEBI:138191"/>
        <dbReference type="EC" id="3.1.1.29"/>
    </reaction>
</comment>
<comment type="subunit">
    <text evidence="1">Monomer.</text>
</comment>
<comment type="subcellular location">
    <subcellularLocation>
        <location evidence="1">Cytoplasm</location>
    </subcellularLocation>
</comment>
<comment type="similarity">
    <text evidence="1">Belongs to the PTH family.</text>
</comment>
<sequence>MWLIVGLGNPGGEYKLTRHNIGFMAVDFLMEGLGNPPIKNQFKAEIAQAKIKDHPVIFCKPQTYMNLSGESVQPLMGFYKIPLERLIVIHDEIDQPFAQMKIQKNRGHGGHNGIKSISGLMGSMDYTRLRLGVGRPANPNIPVPDYVLGKFTKEEFAQMPDFLNKAGDAVESIILDGIQKASTKFNT</sequence>
<name>PTH_BDEBA</name>
<organism>
    <name type="scientific">Bdellovibrio bacteriovorus (strain ATCC 15356 / DSM 50701 / NCIMB 9529 / HD100)</name>
    <dbReference type="NCBI Taxonomy" id="264462"/>
    <lineage>
        <taxon>Bacteria</taxon>
        <taxon>Pseudomonadati</taxon>
        <taxon>Bdellovibrionota</taxon>
        <taxon>Bdellovibrionia</taxon>
        <taxon>Bdellovibrionales</taxon>
        <taxon>Pseudobdellovibrionaceae</taxon>
        <taxon>Bdellovibrio</taxon>
    </lineage>
</organism>
<gene>
    <name evidence="1" type="primary">pth</name>
    <name type="ordered locus">Bd2706</name>
</gene>